<feature type="chain" id="PRO_0000358994" description="Acetyl-coenzyme A carboxylase carboxyl transferase subunit beta">
    <location>
        <begin position="1"/>
        <end position="282"/>
    </location>
</feature>
<feature type="domain" description="CoA carboxyltransferase N-terminal" evidence="2">
    <location>
        <begin position="25"/>
        <end position="282"/>
    </location>
</feature>
<feature type="zinc finger region" description="C4-type" evidence="1">
    <location>
        <begin position="29"/>
        <end position="51"/>
    </location>
</feature>
<feature type="binding site" evidence="1">
    <location>
        <position position="29"/>
    </location>
    <ligand>
        <name>Zn(2+)</name>
        <dbReference type="ChEBI" id="CHEBI:29105"/>
    </ligand>
</feature>
<feature type="binding site" evidence="1">
    <location>
        <position position="32"/>
    </location>
    <ligand>
        <name>Zn(2+)</name>
        <dbReference type="ChEBI" id="CHEBI:29105"/>
    </ligand>
</feature>
<feature type="binding site" evidence="1">
    <location>
        <position position="48"/>
    </location>
    <ligand>
        <name>Zn(2+)</name>
        <dbReference type="ChEBI" id="CHEBI:29105"/>
    </ligand>
</feature>
<feature type="binding site" evidence="1">
    <location>
        <position position="51"/>
    </location>
    <ligand>
        <name>Zn(2+)</name>
        <dbReference type="ChEBI" id="CHEBI:29105"/>
    </ligand>
</feature>
<protein>
    <recommendedName>
        <fullName evidence="1">Acetyl-coenzyme A carboxylase carboxyl transferase subunit beta</fullName>
        <shortName evidence="1">ACCase subunit beta</shortName>
        <shortName evidence="1">Acetyl-CoA carboxylase carboxyltransferase subunit beta</shortName>
        <ecNumber evidence="1">2.1.3.15</ecNumber>
    </recommendedName>
</protein>
<reference key="1">
    <citation type="submission" date="2008-07" db="EMBL/GenBank/DDBJ databases">
        <title>Complete sequence of Geobacter bemidjiensis BEM.</title>
        <authorList>
            <consortium name="US DOE Joint Genome Institute"/>
            <person name="Lucas S."/>
            <person name="Copeland A."/>
            <person name="Lapidus A."/>
            <person name="Glavina del Rio T."/>
            <person name="Dalin E."/>
            <person name="Tice H."/>
            <person name="Bruce D."/>
            <person name="Goodwin L."/>
            <person name="Pitluck S."/>
            <person name="Kiss H."/>
            <person name="Brettin T."/>
            <person name="Detter J.C."/>
            <person name="Han C."/>
            <person name="Kuske C.R."/>
            <person name="Schmutz J."/>
            <person name="Larimer F."/>
            <person name="Land M."/>
            <person name="Hauser L."/>
            <person name="Kyrpides N."/>
            <person name="Lykidis A."/>
            <person name="Lovley D."/>
            <person name="Richardson P."/>
        </authorList>
    </citation>
    <scope>NUCLEOTIDE SEQUENCE [LARGE SCALE GENOMIC DNA]</scope>
    <source>
        <strain>ATCC BAA-1014 / DSM 16622 / JCM 12645 / Bem</strain>
    </source>
</reference>
<keyword id="KW-0067">ATP-binding</keyword>
<keyword id="KW-0963">Cytoplasm</keyword>
<keyword id="KW-0275">Fatty acid biosynthesis</keyword>
<keyword id="KW-0276">Fatty acid metabolism</keyword>
<keyword id="KW-0444">Lipid biosynthesis</keyword>
<keyword id="KW-0443">Lipid metabolism</keyword>
<keyword id="KW-0479">Metal-binding</keyword>
<keyword id="KW-0547">Nucleotide-binding</keyword>
<keyword id="KW-1185">Reference proteome</keyword>
<keyword id="KW-0808">Transferase</keyword>
<keyword id="KW-0862">Zinc</keyword>
<keyword id="KW-0863">Zinc-finger</keyword>
<evidence type="ECO:0000255" key="1">
    <source>
        <dbReference type="HAMAP-Rule" id="MF_01395"/>
    </source>
</evidence>
<evidence type="ECO:0000255" key="2">
    <source>
        <dbReference type="PROSITE-ProRule" id="PRU01136"/>
    </source>
</evidence>
<name>ACCD_CITBB</name>
<dbReference type="EC" id="2.1.3.15" evidence="1"/>
<dbReference type="EMBL" id="CP001124">
    <property type="protein sequence ID" value="ACH40344.1"/>
    <property type="molecule type" value="Genomic_DNA"/>
</dbReference>
<dbReference type="RefSeq" id="WP_012531777.1">
    <property type="nucleotide sequence ID" value="NC_011146.1"/>
</dbReference>
<dbReference type="SMR" id="B5EAK5"/>
<dbReference type="STRING" id="404380.Gbem_3349"/>
<dbReference type="KEGG" id="gbm:Gbem_3349"/>
<dbReference type="eggNOG" id="COG0777">
    <property type="taxonomic scope" value="Bacteria"/>
</dbReference>
<dbReference type="HOGENOM" id="CLU_015486_1_0_7"/>
<dbReference type="OrthoDB" id="9772975at2"/>
<dbReference type="UniPathway" id="UPA00655">
    <property type="reaction ID" value="UER00711"/>
</dbReference>
<dbReference type="Proteomes" id="UP000008825">
    <property type="component" value="Chromosome"/>
</dbReference>
<dbReference type="GO" id="GO:0009329">
    <property type="term" value="C:acetate CoA-transferase complex"/>
    <property type="evidence" value="ECO:0007669"/>
    <property type="project" value="TreeGrafter"/>
</dbReference>
<dbReference type="GO" id="GO:0003989">
    <property type="term" value="F:acetyl-CoA carboxylase activity"/>
    <property type="evidence" value="ECO:0007669"/>
    <property type="project" value="InterPro"/>
</dbReference>
<dbReference type="GO" id="GO:0005524">
    <property type="term" value="F:ATP binding"/>
    <property type="evidence" value="ECO:0007669"/>
    <property type="project" value="UniProtKB-KW"/>
</dbReference>
<dbReference type="GO" id="GO:0016743">
    <property type="term" value="F:carboxyl- or carbamoyltransferase activity"/>
    <property type="evidence" value="ECO:0007669"/>
    <property type="project" value="UniProtKB-UniRule"/>
</dbReference>
<dbReference type="GO" id="GO:0008270">
    <property type="term" value="F:zinc ion binding"/>
    <property type="evidence" value="ECO:0007669"/>
    <property type="project" value="UniProtKB-UniRule"/>
</dbReference>
<dbReference type="GO" id="GO:0006633">
    <property type="term" value="P:fatty acid biosynthetic process"/>
    <property type="evidence" value="ECO:0007669"/>
    <property type="project" value="UniProtKB-KW"/>
</dbReference>
<dbReference type="GO" id="GO:2001295">
    <property type="term" value="P:malonyl-CoA biosynthetic process"/>
    <property type="evidence" value="ECO:0007669"/>
    <property type="project" value="UniProtKB-UniRule"/>
</dbReference>
<dbReference type="Gene3D" id="3.90.226.10">
    <property type="entry name" value="2-enoyl-CoA Hydratase, Chain A, domain 1"/>
    <property type="match status" value="1"/>
</dbReference>
<dbReference type="HAMAP" id="MF_01395">
    <property type="entry name" value="AcetylCoA_CT_beta"/>
    <property type="match status" value="1"/>
</dbReference>
<dbReference type="InterPro" id="IPR034733">
    <property type="entry name" value="AcCoA_carboxyl_beta"/>
</dbReference>
<dbReference type="InterPro" id="IPR000438">
    <property type="entry name" value="Acetyl_CoA_COase_Trfase_b_su"/>
</dbReference>
<dbReference type="InterPro" id="IPR029045">
    <property type="entry name" value="ClpP/crotonase-like_dom_sf"/>
</dbReference>
<dbReference type="InterPro" id="IPR011762">
    <property type="entry name" value="COA_CT_N"/>
</dbReference>
<dbReference type="InterPro" id="IPR041010">
    <property type="entry name" value="Znf-ACC"/>
</dbReference>
<dbReference type="NCBIfam" id="TIGR00515">
    <property type="entry name" value="accD"/>
    <property type="match status" value="1"/>
</dbReference>
<dbReference type="PANTHER" id="PTHR42995">
    <property type="entry name" value="ACETYL-COENZYME A CARBOXYLASE CARBOXYL TRANSFERASE SUBUNIT BETA, CHLOROPLASTIC"/>
    <property type="match status" value="1"/>
</dbReference>
<dbReference type="PANTHER" id="PTHR42995:SF5">
    <property type="entry name" value="ACETYL-COENZYME A CARBOXYLASE CARBOXYL TRANSFERASE SUBUNIT BETA, CHLOROPLASTIC"/>
    <property type="match status" value="1"/>
</dbReference>
<dbReference type="Pfam" id="PF01039">
    <property type="entry name" value="Carboxyl_trans"/>
    <property type="match status" value="1"/>
</dbReference>
<dbReference type="Pfam" id="PF17848">
    <property type="entry name" value="Zn_ribbon_ACC"/>
    <property type="match status" value="1"/>
</dbReference>
<dbReference type="PRINTS" id="PR01070">
    <property type="entry name" value="ACCCTRFRASEB"/>
</dbReference>
<dbReference type="SUPFAM" id="SSF52096">
    <property type="entry name" value="ClpP/crotonase"/>
    <property type="match status" value="1"/>
</dbReference>
<dbReference type="PROSITE" id="PS50980">
    <property type="entry name" value="COA_CT_NTER"/>
    <property type="match status" value="1"/>
</dbReference>
<accession>B5EAK5</accession>
<comment type="function">
    <text evidence="1">Component of the acetyl coenzyme A carboxylase (ACC) complex. Biotin carboxylase (BC) catalyzes the carboxylation of biotin on its carrier protein (BCCP) and then the CO(2) group is transferred by the transcarboxylase to acetyl-CoA to form malonyl-CoA.</text>
</comment>
<comment type="catalytic activity">
    <reaction evidence="1">
        <text>N(6)-carboxybiotinyl-L-lysyl-[protein] + acetyl-CoA = N(6)-biotinyl-L-lysyl-[protein] + malonyl-CoA</text>
        <dbReference type="Rhea" id="RHEA:54728"/>
        <dbReference type="Rhea" id="RHEA-COMP:10505"/>
        <dbReference type="Rhea" id="RHEA-COMP:10506"/>
        <dbReference type="ChEBI" id="CHEBI:57288"/>
        <dbReference type="ChEBI" id="CHEBI:57384"/>
        <dbReference type="ChEBI" id="CHEBI:83144"/>
        <dbReference type="ChEBI" id="CHEBI:83145"/>
        <dbReference type="EC" id="2.1.3.15"/>
    </reaction>
</comment>
<comment type="cofactor">
    <cofactor evidence="1">
        <name>Zn(2+)</name>
        <dbReference type="ChEBI" id="CHEBI:29105"/>
    </cofactor>
    <text evidence="1">Binds 1 zinc ion per subunit.</text>
</comment>
<comment type="pathway">
    <text evidence="1">Lipid metabolism; malonyl-CoA biosynthesis; malonyl-CoA from acetyl-CoA: step 1/1.</text>
</comment>
<comment type="subunit">
    <text evidence="1">Acetyl-CoA carboxylase is a heterohexamer composed of biotin carboxyl carrier protein (AccB), biotin carboxylase (AccC) and two subunits each of ACCase subunit alpha (AccA) and ACCase subunit beta (AccD).</text>
</comment>
<comment type="subcellular location">
    <subcellularLocation>
        <location evidence="1">Cytoplasm</location>
    </subcellularLocation>
</comment>
<comment type="similarity">
    <text evidence="1">Belongs to the AccD/PCCB family.</text>
</comment>
<organism>
    <name type="scientific">Citrifermentans bemidjiense (strain ATCC BAA-1014 / DSM 16622 / JCM 12645 / Bem)</name>
    <name type="common">Geobacter bemidjiensis</name>
    <dbReference type="NCBI Taxonomy" id="404380"/>
    <lineage>
        <taxon>Bacteria</taxon>
        <taxon>Pseudomonadati</taxon>
        <taxon>Thermodesulfobacteriota</taxon>
        <taxon>Desulfuromonadia</taxon>
        <taxon>Geobacterales</taxon>
        <taxon>Geobacteraceae</taxon>
        <taxon>Citrifermentans</taxon>
    </lineage>
</organism>
<proteinExistence type="inferred from homology"/>
<gene>
    <name evidence="1" type="primary">accD</name>
    <name type="ordered locus">Gbem_3349</name>
</gene>
<sequence>MAWFKRDNPPQAKGPAHRVKVPEGLWTKCVSCGETIYTKDIENNLNVCPKCNHHYRVSSKKRLELLLDEGSFTEFDAGVVSVDFLEFKDSKSYQDRIDQALAKGGSKDAIICGSGRIEGTPVQICVFDFSFMGGSMGSVVGEKITRGIERALSDRTPCIIVSASGGARMQESILSLMQMAKTSAALAKLREAGLPFVSILTDPTTGGVTASFAMLGDINMAEPKALIGFAGPRVIEQTIRQKLPQGFQRSEYLLDHGMVDVIVERSKMKSQLSSILTMLYRP</sequence>